<feature type="chain" id="PRO_0000143927" description="Uridylate kinase">
    <location>
        <begin position="1"/>
        <end position="227"/>
    </location>
</feature>
<feature type="binding site">
    <location>
        <begin position="7"/>
        <end position="11"/>
    </location>
    <ligand>
        <name>ATP</name>
        <dbReference type="ChEBI" id="CHEBI:30616"/>
    </ligand>
</feature>
<feature type="binding site" evidence="2">
    <location>
        <position position="44"/>
    </location>
    <ligand>
        <name>UMP</name>
        <dbReference type="ChEBI" id="CHEBI:57865"/>
    </ligand>
</feature>
<feature type="binding site">
    <location>
        <position position="45"/>
    </location>
    <ligand>
        <name>ATP</name>
        <dbReference type="ChEBI" id="CHEBI:30616"/>
    </ligand>
</feature>
<feature type="binding site">
    <location>
        <position position="49"/>
    </location>
    <ligand>
        <name>ATP</name>
        <dbReference type="ChEBI" id="CHEBI:30616"/>
    </ligand>
</feature>
<feature type="binding site" evidence="2">
    <location>
        <position position="66"/>
    </location>
    <ligand>
        <name>UMP</name>
        <dbReference type="ChEBI" id="CHEBI:57865"/>
    </ligand>
</feature>
<feature type="binding site" evidence="2">
    <location>
        <begin position="114"/>
        <end position="120"/>
    </location>
    <ligand>
        <name>UMP</name>
        <dbReference type="ChEBI" id="CHEBI:57865"/>
    </ligand>
</feature>
<feature type="binding site">
    <location>
        <position position="140"/>
    </location>
    <ligand>
        <name>ATP</name>
        <dbReference type="ChEBI" id="CHEBI:30616"/>
    </ligand>
</feature>
<feature type="binding site">
    <location>
        <position position="141"/>
    </location>
    <ligand>
        <name>ATP</name>
        <dbReference type="ChEBI" id="CHEBI:30616"/>
    </ligand>
</feature>
<feature type="binding site">
    <location>
        <position position="146"/>
    </location>
    <ligand>
        <name>ATP</name>
        <dbReference type="ChEBI" id="CHEBI:30616"/>
    </ligand>
</feature>
<feature type="binding site">
    <location>
        <position position="149"/>
    </location>
    <ligand>
        <name>ATP</name>
        <dbReference type="ChEBI" id="CHEBI:30616"/>
    </ligand>
</feature>
<feature type="strand" evidence="4">
    <location>
        <begin position="3"/>
        <end position="8"/>
    </location>
</feature>
<feature type="helix" evidence="4">
    <location>
        <begin position="11"/>
        <end position="14"/>
    </location>
</feature>
<feature type="helix" evidence="4">
    <location>
        <begin position="18"/>
        <end position="33"/>
    </location>
</feature>
<feature type="strand" evidence="4">
    <location>
        <begin position="37"/>
        <end position="42"/>
    </location>
</feature>
<feature type="helix" evidence="4">
    <location>
        <begin position="45"/>
        <end position="57"/>
    </location>
</feature>
<feature type="helix" evidence="4">
    <location>
        <begin position="62"/>
        <end position="84"/>
    </location>
</feature>
<feature type="helix" evidence="4">
    <location>
        <begin position="96"/>
        <end position="103"/>
    </location>
</feature>
<feature type="strand" evidence="4">
    <location>
        <begin position="106"/>
        <end position="111"/>
    </location>
</feature>
<feature type="helix" evidence="4">
    <location>
        <begin position="120"/>
        <end position="130"/>
    </location>
</feature>
<feature type="strand" evidence="4">
    <location>
        <begin position="134"/>
        <end position="144"/>
    </location>
</feature>
<feature type="strand" evidence="4">
    <location>
        <begin position="146"/>
        <end position="148"/>
    </location>
</feature>
<feature type="turn" evidence="4">
    <location>
        <begin position="150"/>
        <end position="152"/>
    </location>
</feature>
<feature type="strand" evidence="4">
    <location>
        <begin position="153"/>
        <end position="155"/>
    </location>
</feature>
<feature type="strand" evidence="4">
    <location>
        <begin position="160"/>
        <end position="163"/>
    </location>
</feature>
<feature type="helix" evidence="4">
    <location>
        <begin position="164"/>
        <end position="171"/>
    </location>
</feature>
<feature type="turn" evidence="5">
    <location>
        <begin position="179"/>
        <end position="181"/>
    </location>
</feature>
<feature type="helix" evidence="4">
    <location>
        <begin position="187"/>
        <end position="195"/>
    </location>
</feature>
<feature type="strand" evidence="4">
    <location>
        <begin position="199"/>
        <end position="204"/>
    </location>
</feature>
<feature type="helix" evidence="4">
    <location>
        <begin position="205"/>
        <end position="210"/>
    </location>
</feature>
<feature type="helix" evidence="4">
    <location>
        <begin position="211"/>
        <end position="215"/>
    </location>
</feature>
<feature type="strand" evidence="4">
    <location>
        <begin position="222"/>
        <end position="225"/>
    </location>
</feature>
<accession>Q97ZE2</accession>
<organism>
    <name type="scientific">Saccharolobus solfataricus (strain ATCC 35092 / DSM 1617 / JCM 11322 / P2)</name>
    <name type="common">Sulfolobus solfataricus</name>
    <dbReference type="NCBI Taxonomy" id="273057"/>
    <lineage>
        <taxon>Archaea</taxon>
        <taxon>Thermoproteota</taxon>
        <taxon>Thermoprotei</taxon>
        <taxon>Sulfolobales</taxon>
        <taxon>Sulfolobaceae</taxon>
        <taxon>Saccharolobus</taxon>
    </lineage>
</organism>
<sequence length="227" mass="25120">MMNIILKISGKFFDEDNVDNLIVLRQSIKELADNGFRVGIVTGGGSTARRYIKLAREIGIGEAYLDLLGIWASRLNAYLVMFSLQDLAYMHVPQSLEEFIQDWSHGKVVVTGGFQPGQSTAAVAALVAEASSSKTLVVATNVDGVYEKDPRIYADVKLIPHLTTQDLRKILEGSQSVQAGTYELLDPLAIKIVERSKIRVIVMNYRKLNRIIDILKGEEVSSIIEPV</sequence>
<protein>
    <recommendedName>
        <fullName>Uridylate kinase</fullName>
        <shortName>UK</shortName>
        <ecNumber>2.7.4.22</ecNumber>
    </recommendedName>
    <alternativeName>
        <fullName>Uridine monophosphate kinase</fullName>
        <shortName>UMP kinase</shortName>
        <shortName>UMPK</shortName>
    </alternativeName>
</protein>
<name>PYRH_SACS2</name>
<gene>
    <name type="primary">pyrH</name>
    <name type="ordered locus">SSO0976</name>
</gene>
<dbReference type="EC" id="2.7.4.22"/>
<dbReference type="EMBL" id="AE006641">
    <property type="protein sequence ID" value="AAK41250.1"/>
    <property type="molecule type" value="Genomic_DNA"/>
</dbReference>
<dbReference type="PIR" id="C90249">
    <property type="entry name" value="C90249"/>
</dbReference>
<dbReference type="PDB" id="2J4J">
    <property type="method" value="X-ray"/>
    <property type="resolution" value="2.10 A"/>
    <property type="chains" value="A/B/C/D/E/F=2-227"/>
</dbReference>
<dbReference type="PDB" id="2J4K">
    <property type="method" value="X-ray"/>
    <property type="resolution" value="2.20 A"/>
    <property type="chains" value="A/B/C/D/E/F=2-227"/>
</dbReference>
<dbReference type="PDB" id="2J4L">
    <property type="method" value="X-ray"/>
    <property type="resolution" value="2.80 A"/>
    <property type="chains" value="A/B/C/D/E/F/G/H/I/J/K/L=2-227"/>
</dbReference>
<dbReference type="PDBsum" id="2J4J"/>
<dbReference type="PDBsum" id="2J4K"/>
<dbReference type="PDBsum" id="2J4L"/>
<dbReference type="SMR" id="Q97ZE2"/>
<dbReference type="FunCoup" id="Q97ZE2">
    <property type="interactions" value="158"/>
</dbReference>
<dbReference type="STRING" id="273057.SSO0976"/>
<dbReference type="PaxDb" id="273057-SSO0976"/>
<dbReference type="DNASU" id="1455217"/>
<dbReference type="EnsemblBacteria" id="AAK41250">
    <property type="protein sequence ID" value="AAK41250"/>
    <property type="gene ID" value="SSO0976"/>
</dbReference>
<dbReference type="KEGG" id="sso:SSO0976"/>
<dbReference type="PATRIC" id="fig|273057.12.peg.975"/>
<dbReference type="eggNOG" id="arCOG00858">
    <property type="taxonomic scope" value="Archaea"/>
</dbReference>
<dbReference type="HOGENOM" id="CLU_079546_0_0_2"/>
<dbReference type="InParanoid" id="Q97ZE2"/>
<dbReference type="PhylomeDB" id="Q97ZE2"/>
<dbReference type="BRENDA" id="2.7.4.22">
    <property type="organism ID" value="6163"/>
</dbReference>
<dbReference type="UniPathway" id="UPA00159">
    <property type="reaction ID" value="UER00275"/>
</dbReference>
<dbReference type="EvolutionaryTrace" id="Q97ZE2"/>
<dbReference type="Proteomes" id="UP000001974">
    <property type="component" value="Chromosome"/>
</dbReference>
<dbReference type="GO" id="GO:0005737">
    <property type="term" value="C:cytoplasm"/>
    <property type="evidence" value="ECO:0007669"/>
    <property type="project" value="UniProtKB-SubCell"/>
</dbReference>
<dbReference type="GO" id="GO:0005524">
    <property type="term" value="F:ATP binding"/>
    <property type="evidence" value="ECO:0007669"/>
    <property type="project" value="UniProtKB-KW"/>
</dbReference>
<dbReference type="GO" id="GO:0033862">
    <property type="term" value="F:UMP kinase activity"/>
    <property type="evidence" value="ECO:0000318"/>
    <property type="project" value="GO_Central"/>
</dbReference>
<dbReference type="GO" id="GO:0044210">
    <property type="term" value="P:'de novo' CTP biosynthetic process"/>
    <property type="evidence" value="ECO:0007669"/>
    <property type="project" value="UniProtKB-UniRule"/>
</dbReference>
<dbReference type="GO" id="GO:0006225">
    <property type="term" value="P:UDP biosynthetic process"/>
    <property type="evidence" value="ECO:0000318"/>
    <property type="project" value="GO_Central"/>
</dbReference>
<dbReference type="CDD" id="cd04253">
    <property type="entry name" value="AAK_UMPK-PyrH-Pf"/>
    <property type="match status" value="1"/>
</dbReference>
<dbReference type="FunFam" id="3.40.1160.10:FF:000030">
    <property type="entry name" value="Uridylate kinase"/>
    <property type="match status" value="1"/>
</dbReference>
<dbReference type="Gene3D" id="3.40.1160.10">
    <property type="entry name" value="Acetylglutamate kinase-like"/>
    <property type="match status" value="1"/>
</dbReference>
<dbReference type="HAMAP" id="MF_01220_A">
    <property type="entry name" value="PyrH_A"/>
    <property type="match status" value="1"/>
</dbReference>
<dbReference type="InterPro" id="IPR036393">
    <property type="entry name" value="AceGlu_kinase-like_sf"/>
</dbReference>
<dbReference type="InterPro" id="IPR001048">
    <property type="entry name" value="Asp/Glu/Uridylate_kinase"/>
</dbReference>
<dbReference type="InterPro" id="IPR011817">
    <property type="entry name" value="Uridylate_kinase"/>
</dbReference>
<dbReference type="InterPro" id="IPR011818">
    <property type="entry name" value="Uridylate_kinase_arch/spir"/>
</dbReference>
<dbReference type="NCBIfam" id="TIGR02076">
    <property type="entry name" value="pyrH_arch"/>
    <property type="match status" value="1"/>
</dbReference>
<dbReference type="PANTHER" id="PTHR42833">
    <property type="entry name" value="URIDYLATE KINASE"/>
    <property type="match status" value="1"/>
</dbReference>
<dbReference type="PANTHER" id="PTHR42833:SF4">
    <property type="entry name" value="URIDYLATE KINASE PUMPKIN, CHLOROPLASTIC"/>
    <property type="match status" value="1"/>
</dbReference>
<dbReference type="Pfam" id="PF00696">
    <property type="entry name" value="AA_kinase"/>
    <property type="match status" value="1"/>
</dbReference>
<dbReference type="PIRSF" id="PIRSF005650">
    <property type="entry name" value="Uridylate_kin"/>
    <property type="match status" value="1"/>
</dbReference>
<dbReference type="SUPFAM" id="SSF53633">
    <property type="entry name" value="Carbamate kinase-like"/>
    <property type="match status" value="1"/>
</dbReference>
<keyword id="KW-0002">3D-structure</keyword>
<keyword id="KW-0067">ATP-binding</keyword>
<keyword id="KW-0963">Cytoplasm</keyword>
<keyword id="KW-0418">Kinase</keyword>
<keyword id="KW-0547">Nucleotide-binding</keyword>
<keyword id="KW-0665">Pyrimidine biosynthesis</keyword>
<keyword id="KW-1185">Reference proteome</keyword>
<keyword id="KW-0808">Transferase</keyword>
<comment type="function">
    <text evidence="2">Catalyzes the reversible phosphorylation of UMP to UDP, with ATP as the most efficient phosphate donor. Is also able to phosphorylate dUMP, although much less efficiently.</text>
</comment>
<comment type="catalytic activity">
    <reaction>
        <text>UMP + ATP = UDP + ADP</text>
        <dbReference type="Rhea" id="RHEA:24400"/>
        <dbReference type="ChEBI" id="CHEBI:30616"/>
        <dbReference type="ChEBI" id="CHEBI:57865"/>
        <dbReference type="ChEBI" id="CHEBI:58223"/>
        <dbReference type="ChEBI" id="CHEBI:456216"/>
        <dbReference type="EC" id="2.7.4.22"/>
    </reaction>
</comment>
<comment type="activity regulation">
    <text evidence="2">Unlike most bacteria, is not activated by GTP. UTP acts as a competitive inhibitor against both substrates. High concentration of UMP abolishes the inhibition of UTP at low ATP concentrations, indicating that UTP binds to the acceptor site (UMP site).</text>
</comment>
<comment type="biophysicochemical properties">
    <kinetics>
        <KM evidence="2">14 uM for UMP (at pH 7.2)</KM>
        <KM evidence="2">81 uM for ATP (at pH 7.2)</KM>
        <Vmax evidence="2">5.0 umol/min/mg enzyme (at pH 5.5)</Vmax>
        <Vmax evidence="2">45.0 umol/min/mg enzyme (at pH 7.2)</Vmax>
        <Vmax evidence="2">12.0 umol/min/mg enzyme (at pH 8.5)</Vmax>
    </kinetics>
    <phDependence>
        <text evidence="2">Optimum pH is 7.0.</text>
    </phDependence>
</comment>
<comment type="pathway">
    <text>Pyrimidine metabolism; CTP biosynthesis via de novo pathway; UDP from UMP (UMPK route): step 1/1.</text>
</comment>
<comment type="subunit">
    <text evidence="2">Homohexamer.</text>
</comment>
<comment type="subcellular location">
    <subcellularLocation>
        <location evidence="1">Cytoplasm</location>
    </subcellularLocation>
</comment>
<comment type="miscellaneous">
    <text>Catalysis proceeds by a sequential bi-bi reaction mechanism of random order.</text>
</comment>
<comment type="similarity">
    <text evidence="3">Belongs to the UMP kinase family.</text>
</comment>
<reference key="1">
    <citation type="journal article" date="2001" name="Proc. Natl. Acad. Sci. U.S.A.">
        <title>The complete genome of the crenarchaeon Sulfolobus solfataricus P2.</title>
        <authorList>
            <person name="She Q."/>
            <person name="Singh R.K."/>
            <person name="Confalonieri F."/>
            <person name="Zivanovic Y."/>
            <person name="Allard G."/>
            <person name="Awayez M.J."/>
            <person name="Chan-Weiher C.C.-Y."/>
            <person name="Clausen I.G."/>
            <person name="Curtis B.A."/>
            <person name="De Moors A."/>
            <person name="Erauso G."/>
            <person name="Fletcher C."/>
            <person name="Gordon P.M.K."/>
            <person name="Heikamp-de Jong I."/>
            <person name="Jeffries A.C."/>
            <person name="Kozera C.J."/>
            <person name="Medina N."/>
            <person name="Peng X."/>
            <person name="Thi-Ngoc H.P."/>
            <person name="Redder P."/>
            <person name="Schenk M.E."/>
            <person name="Theriault C."/>
            <person name="Tolstrup N."/>
            <person name="Charlebois R.L."/>
            <person name="Doolittle W.F."/>
            <person name="Duguet M."/>
            <person name="Gaasterland T."/>
            <person name="Garrett R.A."/>
            <person name="Ragan M.A."/>
            <person name="Sensen C.W."/>
            <person name="Van der Oost J."/>
        </authorList>
    </citation>
    <scope>NUCLEOTIDE SEQUENCE [LARGE SCALE GENOMIC DNA]</scope>
    <source>
        <strain>ATCC 35092 / DSM 1617 / JCM 11322 / P2</strain>
    </source>
</reference>
<reference key="2">
    <citation type="journal article" date="2007" name="Biochemistry">
        <title>Structural and enzymatic investigation of the Sulfolobus solfataricus uridylate kinase shows competitive UTP inhibition and the lack of GTP stimulation.</title>
        <authorList>
            <person name="Jensen K.S."/>
            <person name="Johansson E."/>
            <person name="Jensen K.F."/>
        </authorList>
    </citation>
    <scope>X-RAY CRYSTALLOGRAPHY (2.1 ANGSTROMS) OF 2-227 IN COMPLEX WITH UMP; ATP ANALOG AND UTP</scope>
    <scope>FUNCTION</scope>
    <scope>ACTIVITY REGULATION</scope>
    <scope>SUBSTRATE SPECIFICITY</scope>
    <scope>BIOPHYSICOCHEMICAL PROPERTIES</scope>
    <scope>SUBUNIT</scope>
    <scope>REACTION MECHANISM</scope>
    <source>
        <strain>ATCC 35092 / DSM 1617 / JCM 11322 / P2</strain>
    </source>
</reference>
<evidence type="ECO:0000250" key="1"/>
<evidence type="ECO:0000269" key="2">
    <source>
    </source>
</evidence>
<evidence type="ECO:0000305" key="3"/>
<evidence type="ECO:0007829" key="4">
    <source>
        <dbReference type="PDB" id="2J4J"/>
    </source>
</evidence>
<evidence type="ECO:0007829" key="5">
    <source>
        <dbReference type="PDB" id="2J4K"/>
    </source>
</evidence>
<proteinExistence type="evidence at protein level"/>